<comment type="function">
    <text evidence="1">Binds to the 23S rRNA.</text>
</comment>
<comment type="subunit">
    <text evidence="1">Part of the 50S ribosomal subunit.</text>
</comment>
<comment type="similarity">
    <text evidence="1">Belongs to the universal ribosomal protein uL15 family.</text>
</comment>
<reference key="1">
    <citation type="journal article" date="2005" name="Infect. Immun.">
        <title>Whole-genome analyses of speciation events in pathogenic Brucellae.</title>
        <authorList>
            <person name="Chain P.S."/>
            <person name="Comerci D.J."/>
            <person name="Tolmasky M.E."/>
            <person name="Larimer F.W."/>
            <person name="Malfatti S.A."/>
            <person name="Vergez L.M."/>
            <person name="Aguero F."/>
            <person name="Land M.L."/>
            <person name="Ugalde R.A."/>
            <person name="Garcia E."/>
        </authorList>
    </citation>
    <scope>NUCLEOTIDE SEQUENCE [LARGE SCALE GENOMIC DNA]</scope>
    <source>
        <strain>2308</strain>
    </source>
</reference>
<name>RL15_BRUA2</name>
<gene>
    <name evidence="1" type="primary">rplO</name>
    <name type="ordered locus">BAB1_1236</name>
</gene>
<proteinExistence type="inferred from homology"/>
<protein>
    <recommendedName>
        <fullName evidence="1">Large ribosomal subunit protein uL15</fullName>
    </recommendedName>
    <alternativeName>
        <fullName evidence="3">50S ribosomal protein L15</fullName>
    </alternativeName>
</protein>
<keyword id="KW-1185">Reference proteome</keyword>
<keyword id="KW-0687">Ribonucleoprotein</keyword>
<keyword id="KW-0689">Ribosomal protein</keyword>
<keyword id="KW-0694">RNA-binding</keyword>
<keyword id="KW-0699">rRNA-binding</keyword>
<evidence type="ECO:0000255" key="1">
    <source>
        <dbReference type="HAMAP-Rule" id="MF_01341"/>
    </source>
</evidence>
<evidence type="ECO:0000256" key="2">
    <source>
        <dbReference type="SAM" id="MobiDB-lite"/>
    </source>
</evidence>
<evidence type="ECO:0000305" key="3"/>
<dbReference type="EMBL" id="AM040264">
    <property type="protein sequence ID" value="CAJ11192.1"/>
    <property type="molecule type" value="Genomic_DNA"/>
</dbReference>
<dbReference type="RefSeq" id="WP_002964343.1">
    <property type="nucleotide sequence ID" value="NZ_KN046823.1"/>
</dbReference>
<dbReference type="SMR" id="Q2YRT5"/>
<dbReference type="STRING" id="359391.BAB1_1236"/>
<dbReference type="GeneID" id="97533543"/>
<dbReference type="KEGG" id="bmf:BAB1_1236"/>
<dbReference type="PATRIC" id="fig|359391.11.peg.136"/>
<dbReference type="HOGENOM" id="CLU_055188_4_0_5"/>
<dbReference type="PhylomeDB" id="Q2YRT5"/>
<dbReference type="Proteomes" id="UP000002719">
    <property type="component" value="Chromosome I"/>
</dbReference>
<dbReference type="GO" id="GO:0022625">
    <property type="term" value="C:cytosolic large ribosomal subunit"/>
    <property type="evidence" value="ECO:0007669"/>
    <property type="project" value="TreeGrafter"/>
</dbReference>
<dbReference type="GO" id="GO:0019843">
    <property type="term" value="F:rRNA binding"/>
    <property type="evidence" value="ECO:0007669"/>
    <property type="project" value="UniProtKB-UniRule"/>
</dbReference>
<dbReference type="GO" id="GO:0003735">
    <property type="term" value="F:structural constituent of ribosome"/>
    <property type="evidence" value="ECO:0007669"/>
    <property type="project" value="InterPro"/>
</dbReference>
<dbReference type="GO" id="GO:0006412">
    <property type="term" value="P:translation"/>
    <property type="evidence" value="ECO:0007669"/>
    <property type="project" value="UniProtKB-UniRule"/>
</dbReference>
<dbReference type="Gene3D" id="3.100.10.10">
    <property type="match status" value="1"/>
</dbReference>
<dbReference type="HAMAP" id="MF_01341">
    <property type="entry name" value="Ribosomal_uL15"/>
    <property type="match status" value="1"/>
</dbReference>
<dbReference type="InterPro" id="IPR030878">
    <property type="entry name" value="Ribosomal_uL15"/>
</dbReference>
<dbReference type="InterPro" id="IPR021131">
    <property type="entry name" value="Ribosomal_uL15/eL18"/>
</dbReference>
<dbReference type="InterPro" id="IPR036227">
    <property type="entry name" value="Ribosomal_uL15/eL18_sf"/>
</dbReference>
<dbReference type="InterPro" id="IPR005749">
    <property type="entry name" value="Ribosomal_uL15_bac-type"/>
</dbReference>
<dbReference type="InterPro" id="IPR001196">
    <property type="entry name" value="Ribosomal_uL15_CS"/>
</dbReference>
<dbReference type="NCBIfam" id="TIGR01071">
    <property type="entry name" value="rplO_bact"/>
    <property type="match status" value="1"/>
</dbReference>
<dbReference type="PANTHER" id="PTHR12934">
    <property type="entry name" value="50S RIBOSOMAL PROTEIN L15"/>
    <property type="match status" value="1"/>
</dbReference>
<dbReference type="PANTHER" id="PTHR12934:SF11">
    <property type="entry name" value="LARGE RIBOSOMAL SUBUNIT PROTEIN UL15M"/>
    <property type="match status" value="1"/>
</dbReference>
<dbReference type="Pfam" id="PF00828">
    <property type="entry name" value="Ribosomal_L27A"/>
    <property type="match status" value="1"/>
</dbReference>
<dbReference type="SUPFAM" id="SSF52080">
    <property type="entry name" value="Ribosomal proteins L15p and L18e"/>
    <property type="match status" value="1"/>
</dbReference>
<dbReference type="PROSITE" id="PS00475">
    <property type="entry name" value="RIBOSOMAL_L15"/>
    <property type="match status" value="1"/>
</dbReference>
<accession>Q2YRT5</accession>
<sequence length="156" mass="16245">MKLNDLRDKPGSVKARKRVGRGIGSGTGKTGGRGVKGQKSRSGVSINGFEGGQMPIYRRLPKRGFTNIFAKSFNVVSLGRIQAAIDAGKLDAKAVVNLDSLKAAGVIRRAKDGVRILSDGELKAKVAFEVAGASKAAVEKIEKAGGSIKLPEAAAE</sequence>
<organism>
    <name type="scientific">Brucella abortus (strain 2308)</name>
    <dbReference type="NCBI Taxonomy" id="359391"/>
    <lineage>
        <taxon>Bacteria</taxon>
        <taxon>Pseudomonadati</taxon>
        <taxon>Pseudomonadota</taxon>
        <taxon>Alphaproteobacteria</taxon>
        <taxon>Hyphomicrobiales</taxon>
        <taxon>Brucellaceae</taxon>
        <taxon>Brucella/Ochrobactrum group</taxon>
        <taxon>Brucella</taxon>
    </lineage>
</organism>
<feature type="chain" id="PRO_0000251492" description="Large ribosomal subunit protein uL15">
    <location>
        <begin position="1"/>
        <end position="156"/>
    </location>
</feature>
<feature type="region of interest" description="Disordered" evidence="2">
    <location>
        <begin position="1"/>
        <end position="44"/>
    </location>
</feature>
<feature type="compositionally biased region" description="Basic and acidic residues" evidence="2">
    <location>
        <begin position="1"/>
        <end position="11"/>
    </location>
</feature>
<feature type="compositionally biased region" description="Gly residues" evidence="2">
    <location>
        <begin position="21"/>
        <end position="35"/>
    </location>
</feature>